<organism>
    <name type="scientific">Blastomyces gilchristii (strain SLH14081)</name>
    <name type="common">Blastomyces dermatitidis</name>
    <dbReference type="NCBI Taxonomy" id="559298"/>
    <lineage>
        <taxon>Eukaryota</taxon>
        <taxon>Fungi</taxon>
        <taxon>Dikarya</taxon>
        <taxon>Ascomycota</taxon>
        <taxon>Pezizomycotina</taxon>
        <taxon>Eurotiomycetes</taxon>
        <taxon>Eurotiomycetidae</taxon>
        <taxon>Onygenales</taxon>
        <taxon>Ajellomycetaceae</taxon>
        <taxon>Blastomyces</taxon>
    </lineage>
</organism>
<gene>
    <name type="primary">RRG9</name>
    <name type="ORF">BDBG_05580</name>
</gene>
<protein>
    <recommendedName>
        <fullName>Required for respiratory growth protein 9, mitochondrial</fullName>
    </recommendedName>
</protein>
<reference key="1">
    <citation type="journal article" date="2015" name="PLoS Genet.">
        <title>The dynamic genome and transcriptome of the human fungal pathogen Blastomyces and close relative Emmonsia.</title>
        <authorList>
            <person name="Munoz J.F."/>
            <person name="Gauthier G.M."/>
            <person name="Desjardins C.A."/>
            <person name="Gallo J.E."/>
            <person name="Holder J."/>
            <person name="Sullivan T.D."/>
            <person name="Marty A.J."/>
            <person name="Carmen J.C."/>
            <person name="Chen Z."/>
            <person name="Ding L."/>
            <person name="Gujja S."/>
            <person name="Magrini V."/>
            <person name="Misas E."/>
            <person name="Mitreva M."/>
            <person name="Priest M."/>
            <person name="Saif S."/>
            <person name="Whiston E.A."/>
            <person name="Young S."/>
            <person name="Zeng Q."/>
            <person name="Goldman W.E."/>
            <person name="Mardis E.R."/>
            <person name="Taylor J.W."/>
            <person name="McEwen J.G."/>
            <person name="Clay O.K."/>
            <person name="Klein B.S."/>
            <person name="Cuomo C.A."/>
        </authorList>
    </citation>
    <scope>NUCLEOTIDE SEQUENCE [LARGE SCALE GENOMIC DNA]</scope>
    <source>
        <strain>SLH14081</strain>
    </source>
</reference>
<feature type="transit peptide" description="Mitochondrion" evidence="2">
    <location>
        <begin position="1"/>
        <end position="68"/>
    </location>
</feature>
<feature type="chain" id="PRO_0000407932" description="Required for respiratory growth protein 9, mitochondrial">
    <location>
        <begin position="69"/>
        <end position="265"/>
    </location>
</feature>
<feature type="region of interest" description="Disordered" evidence="3">
    <location>
        <begin position="69"/>
        <end position="167"/>
    </location>
</feature>
<feature type="compositionally biased region" description="Polar residues" evidence="3">
    <location>
        <begin position="72"/>
        <end position="87"/>
    </location>
</feature>
<feature type="compositionally biased region" description="Basic and acidic residues" evidence="3">
    <location>
        <begin position="95"/>
        <end position="106"/>
    </location>
</feature>
<feature type="compositionally biased region" description="Basic and acidic residues" evidence="3">
    <location>
        <begin position="131"/>
        <end position="143"/>
    </location>
</feature>
<accession>C5JS82</accession>
<accession>A0A179US44</accession>
<sequence length="265" mass="30190">MLKSSPLHSASVASGLLKCFLGAHPLLPATYEKCGLTTSCRRSTTIHSPAKIWQPPSCRYFSKSRPILSPLPETSEQSSPSYLSTANKPPGTDEQGLKSDRGDINSDSKSTSKTSRSKKSNVPRSSKSTTQKREKPEKPRELEPWQIQKQALKKKFPEGWNPRKRLHPDTLDTIRHLHQQDPNIYSTPALAQEFKVSPEAIRRILKSKWQPTPEVAAERRERWEKRRKRIWNQLSEIGVRPHRPSFADVSDTKVLEKKRRTVGSK</sequence>
<evidence type="ECO:0000250" key="1"/>
<evidence type="ECO:0000255" key="2"/>
<evidence type="ECO:0000256" key="3">
    <source>
        <dbReference type="SAM" id="MobiDB-lite"/>
    </source>
</evidence>
<evidence type="ECO:0000305" key="4"/>
<dbReference type="EMBL" id="GG657458">
    <property type="protein sequence ID" value="OAT09887.1"/>
    <property type="status" value="ALT_INIT"/>
    <property type="molecule type" value="Genomic_DNA"/>
</dbReference>
<dbReference type="RefSeq" id="XP_002624072.1">
    <property type="nucleotide sequence ID" value="XM_002624026.1"/>
</dbReference>
<dbReference type="SMR" id="C5JS82"/>
<dbReference type="STRING" id="559298.C5JS82"/>
<dbReference type="GeneID" id="8504003"/>
<dbReference type="KEGG" id="bgh:BDBG_05580"/>
<dbReference type="HOGENOM" id="CLU_081333_0_0_1"/>
<dbReference type="OrthoDB" id="5578174at2759"/>
<dbReference type="Proteomes" id="UP000002038">
    <property type="component" value="Unassembled WGS sequence"/>
</dbReference>
<dbReference type="GO" id="GO:0005739">
    <property type="term" value="C:mitochondrion"/>
    <property type="evidence" value="ECO:0007669"/>
    <property type="project" value="UniProtKB-SubCell"/>
</dbReference>
<dbReference type="GO" id="GO:0005634">
    <property type="term" value="C:nucleus"/>
    <property type="evidence" value="ECO:0007669"/>
    <property type="project" value="TreeGrafter"/>
</dbReference>
<dbReference type="InterPro" id="IPR010487">
    <property type="entry name" value="NGRN/Rrg9"/>
</dbReference>
<dbReference type="PANTHER" id="PTHR13475">
    <property type="entry name" value="NEUGRIN"/>
    <property type="match status" value="1"/>
</dbReference>
<dbReference type="PANTHER" id="PTHR13475:SF3">
    <property type="entry name" value="NEUGRIN"/>
    <property type="match status" value="1"/>
</dbReference>
<dbReference type="Pfam" id="PF06413">
    <property type="entry name" value="Neugrin"/>
    <property type="match status" value="1"/>
</dbReference>
<name>RRG9_BLAGS</name>
<comment type="function">
    <text evidence="1">Required for respiratory activity and maintenance and expression of the mitochondrial genome.</text>
</comment>
<comment type="subcellular location">
    <subcellularLocation>
        <location evidence="1">Mitochondrion</location>
    </subcellularLocation>
</comment>
<comment type="similarity">
    <text evidence="4">Belongs to the RRG9 family.</text>
</comment>
<comment type="sequence caution" evidence="4">
    <conflict type="erroneous initiation">
        <sequence resource="EMBL-CDS" id="OAT09887"/>
    </conflict>
    <text>Extended N-terminus.</text>
</comment>
<proteinExistence type="inferred from homology"/>
<keyword id="KW-0496">Mitochondrion</keyword>
<keyword id="KW-1185">Reference proteome</keyword>
<keyword id="KW-0809">Transit peptide</keyword>